<proteinExistence type="evidence at protein level"/>
<comment type="function">
    <text evidence="9 10 18 19">Tube-forming lipid transport protein which provides phosphatidylethanolamine for glycosylphosphatidylinositol (GPI) anchor synthesis in the endoplasmic reticulum (Probable). Plays a role in endosomal trafficking and endosome recycling. Also involved in the actin cytoskeleton and cilia structural dynamics (PubMed:30906834). Acts as a regulator of phagocytosis (PubMed:31540829).</text>
</comment>
<comment type="interaction">
    <interactant intactId="EBI-2683809">
        <id>Q2LD37</id>
    </interactant>
    <interactant intactId="EBI-491549">
        <id>P35222</id>
        <label>CTNNB1</label>
    </interactant>
    <organismsDiffer>false</organismsDiffer>
    <experiments>2</experiments>
</comment>
<comment type="subcellular location">
    <subcellularLocation>
        <location evidence="2">Cell membrane</location>
        <topology evidence="3">Single-pass membrane protein</topology>
    </subcellularLocation>
    <subcellularLocation>
        <location evidence="2">Endoplasmic reticulum membrane</location>
        <topology evidence="3">Single-pass membrane protein</topology>
    </subcellularLocation>
    <subcellularLocation>
        <location evidence="2">Mitochondrion membrane</location>
        <topology evidence="3">Single-pass membrane protein</topology>
    </subcellularLocation>
    <text evidence="2">Localizes to endoplasmic reticulum-cell membrane and some endoplasmic reticulum-mitochondria contact sites.</text>
</comment>
<comment type="alternative products">
    <event type="alternative splicing"/>
    <isoform>
        <id>Q2LD37-1</id>
        <name>1</name>
        <sequence type="displayed"/>
    </isoform>
    <isoform>
        <id>Q2LD37-2</id>
        <name>2</name>
        <sequence type="described" ref="VSP_031023 VSP_031026 VSP_031027"/>
    </isoform>
    <isoform>
        <id>Q2LD37-4</id>
        <name>4</name>
        <sequence type="described" ref="VSP_031023"/>
    </isoform>
    <isoform>
        <id>Q2LD37-5</id>
        <name>5</name>
        <sequence type="described" ref="VSP_031024 VSP_031025"/>
    </isoform>
    <isoform>
        <id>Q2LD37-6</id>
        <name>6</name>
        <sequence type="described" ref="VSP_031028 VSP_031029"/>
    </isoform>
    <isoform>
        <id>Q2LD37-7</id>
        <name>7</name>
        <sequence type="described" ref="VSP_031030 VSP_031031"/>
    </isoform>
</comment>
<comment type="tissue specificity">
    <text evidence="5">Highly expressed in testis and ovary. Weakly or not expressed in other tissues.</text>
</comment>
<comment type="disease" evidence="6 7 8 9 11">
    <disease id="DI-05169">
        <name>Alkuraya-Kucinskas syndrome</name>
        <acronym>ALKKUCS</acronym>
        <description>An autosomal recessive syndrome characterized by brain atrophy and arthrogryposis. Patients present with cerebral parenchymal underdevelopment, lissencephaly, severe to mild ventriculomegaly, and cerebellar hypoplasia with brainstem dysgenesis. Most affected individuals die in utero or soon after birth. The few patients who survive have variable intellectual disability and may have seizures. Facial dysmorphism, cardiac and ophthalmologic anomalies, such as microphthalmia and cataract, are additional features.</description>
        <dbReference type="MIM" id="617822"/>
    </disease>
    <text>The disease is caused by variants affecting the gene represented in this entry.</text>
</comment>
<comment type="miscellaneous">
    <text>KIAA1109 is mapped in the genomic region associated with susceptibility to celiac disease (CELIAC6).</text>
</comment>
<comment type="sequence caution" evidence="17">
    <conflict type="erroneous initiation">
        <sequence resource="EMBL-CDS" id="AAH18094"/>
    </conflict>
    <text>Extended N-terminus.</text>
</comment>
<comment type="sequence caution" evidence="17">
    <conflict type="erroneous initiation">
        <sequence resource="EMBL-CDS" id="AAH45783"/>
    </conflict>
    <text>Extended N-terminus.</text>
</comment>
<comment type="sequence caution" evidence="17">
    <conflict type="erroneous termination">
        <sequence resource="EMBL-CDS" id="AAI08275"/>
    </conflict>
    <text>Truncated C-terminus.</text>
</comment>
<comment type="sequence caution" evidence="17">
    <conflict type="erroneous initiation">
        <sequence resource="EMBL-CDS" id="BAB15057"/>
    </conflict>
    <text>Extended N-terminus.</text>
</comment>
<comment type="sequence caution" evidence="17">
    <conflict type="erroneous initiation">
        <sequence resource="EMBL-CDS" id="BAC85988"/>
    </conflict>
    <text>Extended N-terminus.</text>
</comment>
<comment type="sequence caution" evidence="17">
    <conflict type="miscellaneous discrepancy">
        <sequence resource="EMBL-CDS" id="BAC87084"/>
    </conflict>
    <text>Probable cloning artifact.</text>
</comment>
<protein>
    <recommendedName>
        <fullName evidence="17">Bridge-like lipid transfer protein family member 1</fullName>
    </recommendedName>
    <alternativeName>
        <fullName>Fragile site-associated protein</fullName>
    </alternativeName>
</protein>
<keyword id="KW-0025">Alternative splicing</keyword>
<keyword id="KW-1003">Cell membrane</keyword>
<keyword id="KW-0225">Disease variant</keyword>
<keyword id="KW-0256">Endoplasmic reticulum</keyword>
<keyword id="KW-0472">Membrane</keyword>
<keyword id="KW-0496">Mitochondrion</keyword>
<keyword id="KW-0597">Phosphoprotein</keyword>
<keyword id="KW-1267">Proteomics identification</keyword>
<keyword id="KW-1185">Reference proteome</keyword>
<keyword id="KW-0812">Transmembrane</keyword>
<keyword id="KW-1133">Transmembrane helix</keyword>
<gene>
    <name evidence="20" type="primary">BLTP1</name>
    <name type="synonym">FSA</name>
    <name type="synonym">KIAA1109</name>
    <name type="synonym">KIAA1371</name>
    <name evidence="15 16" type="synonym">TWEEK</name>
</gene>
<dbReference type="EMBL" id="DQ335469">
    <property type="protein sequence ID" value="ABC59821.1"/>
    <property type="molecule type" value="mRNA"/>
</dbReference>
<dbReference type="EMBL" id="AC022489">
    <property type="status" value="NOT_ANNOTATED_CDS"/>
    <property type="molecule type" value="Genomic_DNA"/>
</dbReference>
<dbReference type="EMBL" id="AC127089">
    <property type="protein sequence ID" value="AAY41044.1"/>
    <property type="molecule type" value="Genomic_DNA"/>
</dbReference>
<dbReference type="EMBL" id="AC104658">
    <property type="status" value="NOT_ANNOTATED_CDS"/>
    <property type="molecule type" value="Genomic_DNA"/>
</dbReference>
<dbReference type="EMBL" id="AK025057">
    <property type="protein sequence ID" value="BAB15057.1"/>
    <property type="status" value="ALT_INIT"/>
    <property type="molecule type" value="mRNA"/>
</dbReference>
<dbReference type="EMBL" id="AK124902">
    <property type="protein sequence ID" value="BAC85988.1"/>
    <property type="status" value="ALT_INIT"/>
    <property type="molecule type" value="mRNA"/>
</dbReference>
<dbReference type="EMBL" id="AK127686">
    <property type="protein sequence ID" value="BAC87084.1"/>
    <property type="status" value="ALT_SEQ"/>
    <property type="molecule type" value="mRNA"/>
</dbReference>
<dbReference type="EMBL" id="AB037792">
    <property type="protein sequence ID" value="BAA92609.1"/>
    <property type="molecule type" value="mRNA"/>
</dbReference>
<dbReference type="EMBL" id="AL137254">
    <property type="protein sequence ID" value="CAB70656.1"/>
    <property type="molecule type" value="mRNA"/>
</dbReference>
<dbReference type="EMBL" id="AL137384">
    <property type="protein sequence ID" value="CAB70718.1"/>
    <property type="molecule type" value="mRNA"/>
</dbReference>
<dbReference type="EMBL" id="AL137532">
    <property type="protein sequence ID" value="CAB70795.1"/>
    <property type="molecule type" value="mRNA"/>
</dbReference>
<dbReference type="EMBL" id="CR936613">
    <property type="protein sequence ID" value="CAI56756.1"/>
    <property type="molecule type" value="mRNA"/>
</dbReference>
<dbReference type="EMBL" id="AB029032">
    <property type="protein sequence ID" value="BAA83061.2"/>
    <property type="molecule type" value="mRNA"/>
</dbReference>
<dbReference type="EMBL" id="BC108274">
    <property type="protein sequence ID" value="AAI08275.1"/>
    <property type="status" value="ALT_SEQ"/>
    <property type="molecule type" value="mRNA"/>
</dbReference>
<dbReference type="EMBL" id="BC018094">
    <property type="protein sequence ID" value="AAH18094.2"/>
    <property type="status" value="ALT_INIT"/>
    <property type="molecule type" value="mRNA"/>
</dbReference>
<dbReference type="EMBL" id="BC045783">
    <property type="protein sequence ID" value="AAH45783.1"/>
    <property type="status" value="ALT_INIT"/>
    <property type="molecule type" value="mRNA"/>
</dbReference>
<dbReference type="CCDS" id="CCDS43267.1">
    <molecule id="Q2LD37-1"/>
</dbReference>
<dbReference type="PIR" id="T46326">
    <property type="entry name" value="T46326"/>
</dbReference>
<dbReference type="PIR" id="T46376">
    <property type="entry name" value="T46376"/>
</dbReference>
<dbReference type="PIR" id="T46438">
    <property type="entry name" value="T46438"/>
</dbReference>
<dbReference type="RefSeq" id="NP_056127.2">
    <molecule id="Q2LD37-1"/>
    <property type="nucleotide sequence ID" value="NM_015312.3"/>
</dbReference>
<dbReference type="RefSeq" id="XP_005263344.1">
    <molecule id="Q2LD37-1"/>
    <property type="nucleotide sequence ID" value="XM_005263287.2"/>
</dbReference>
<dbReference type="RefSeq" id="XP_006714407.1">
    <molecule id="Q2LD37-4"/>
    <property type="nucleotide sequence ID" value="XM_006714344.2"/>
</dbReference>
<dbReference type="RefSeq" id="XP_054206982.1">
    <molecule id="Q2LD37-1"/>
    <property type="nucleotide sequence ID" value="XM_054351007.1"/>
</dbReference>
<dbReference type="RefSeq" id="XP_054206999.1">
    <molecule id="Q2LD37-4"/>
    <property type="nucleotide sequence ID" value="XM_054351024.1"/>
</dbReference>
<dbReference type="SMR" id="Q2LD37"/>
<dbReference type="BioGRID" id="123919">
    <property type="interactions" value="43"/>
</dbReference>
<dbReference type="FunCoup" id="Q2LD37">
    <property type="interactions" value="2698"/>
</dbReference>
<dbReference type="IntAct" id="Q2LD37">
    <property type="interactions" value="11"/>
</dbReference>
<dbReference type="MINT" id="Q2LD37"/>
<dbReference type="STRING" id="9606.ENSP00000264501"/>
<dbReference type="TCDB" id="8.A.6.1.3">
    <property type="family name" value="the auxiliary nutrient transporter (ant) family"/>
</dbReference>
<dbReference type="GlyGen" id="Q2LD37">
    <property type="glycosylation" value="4 sites, 1 O-linked glycan (2 sites)"/>
</dbReference>
<dbReference type="iPTMnet" id="Q2LD37"/>
<dbReference type="PhosphoSitePlus" id="Q2LD37"/>
<dbReference type="SwissPalm" id="Q2LD37"/>
<dbReference type="BioMuta" id="KIAA1109"/>
<dbReference type="DMDM" id="317373370"/>
<dbReference type="jPOST" id="Q2LD37"/>
<dbReference type="MassIVE" id="Q2LD37"/>
<dbReference type="PaxDb" id="9606-ENSP00000264501"/>
<dbReference type="PeptideAtlas" id="Q2LD37"/>
<dbReference type="ProteomicsDB" id="61331">
    <molecule id="Q2LD37-1"/>
</dbReference>
<dbReference type="ProteomicsDB" id="61332">
    <molecule id="Q2LD37-2"/>
</dbReference>
<dbReference type="ProteomicsDB" id="61333">
    <molecule id="Q2LD37-4"/>
</dbReference>
<dbReference type="ProteomicsDB" id="61334">
    <molecule id="Q2LD37-5"/>
</dbReference>
<dbReference type="ProteomicsDB" id="61335">
    <molecule id="Q2LD37-6"/>
</dbReference>
<dbReference type="ProteomicsDB" id="61336">
    <molecule id="Q2LD37-7"/>
</dbReference>
<dbReference type="Pumba" id="Q2LD37"/>
<dbReference type="Antibodypedia" id="26783">
    <property type="antibodies" value="12 antibodies from 7 providers"/>
</dbReference>
<dbReference type="DNASU" id="84162"/>
<dbReference type="Ensembl" id="ENST00000264501.8">
    <molecule id="Q2LD37-1"/>
    <property type="protein sequence ID" value="ENSP00000264501.4"/>
    <property type="gene ID" value="ENSG00000138688.17"/>
</dbReference>
<dbReference type="GeneID" id="84162"/>
<dbReference type="KEGG" id="hsa:84162"/>
<dbReference type="UCSC" id="uc003ieh.4">
    <molecule id="Q2LD37-1"/>
    <property type="organism name" value="human"/>
</dbReference>
<dbReference type="AGR" id="HGNC:26953"/>
<dbReference type="CTD" id="84162"/>
<dbReference type="DisGeNET" id="84162"/>
<dbReference type="GeneCards" id="BLTP1"/>
<dbReference type="HGNC" id="HGNC:26953">
    <property type="gene designation" value="BLTP1"/>
</dbReference>
<dbReference type="HPA" id="ENSG00000138688">
    <property type="expression patterns" value="Low tissue specificity"/>
</dbReference>
<dbReference type="MalaCards" id="BLTP1"/>
<dbReference type="MIM" id="611565">
    <property type="type" value="gene"/>
</dbReference>
<dbReference type="MIM" id="617822">
    <property type="type" value="phenotype"/>
</dbReference>
<dbReference type="neXtProt" id="NX_Q2LD37"/>
<dbReference type="OpenTargets" id="ENSG00000138688"/>
<dbReference type="Orphanet" id="610569">
    <property type="disease" value="KIAA1109-related early lethal congenital brain malformations-arthrogryposis syndrome"/>
</dbReference>
<dbReference type="PharmGKB" id="PA142671621"/>
<dbReference type="VEuPathDB" id="HostDB:ENSG00000138688"/>
<dbReference type="eggNOG" id="KOG3596">
    <property type="taxonomic scope" value="Eukaryota"/>
</dbReference>
<dbReference type="GeneTree" id="ENSGT00640000091487"/>
<dbReference type="HOGENOM" id="CLU_000118_0_0_1"/>
<dbReference type="InParanoid" id="Q2LD37"/>
<dbReference type="OMA" id="MRHELRH"/>
<dbReference type="OrthoDB" id="10051416at2759"/>
<dbReference type="PAN-GO" id="Q2LD37">
    <property type="GO annotations" value="1 GO annotation based on evolutionary models"/>
</dbReference>
<dbReference type="PhylomeDB" id="Q2LD37"/>
<dbReference type="TreeFam" id="TF105915"/>
<dbReference type="PathwayCommons" id="Q2LD37"/>
<dbReference type="SignaLink" id="Q2LD37"/>
<dbReference type="BioGRID-ORCS" id="84162">
    <property type="hits" value="21 hits in 1163 CRISPR screens"/>
</dbReference>
<dbReference type="ChiTaRS" id="KIAA1109">
    <property type="organism name" value="human"/>
</dbReference>
<dbReference type="GeneWiki" id="KIAA1109"/>
<dbReference type="GenomeRNAi" id="84162"/>
<dbReference type="Pharos" id="Q2LD37">
    <property type="development level" value="Tbio"/>
</dbReference>
<dbReference type="PRO" id="PR:Q2LD37"/>
<dbReference type="Proteomes" id="UP000005640">
    <property type="component" value="Chromosome 4"/>
</dbReference>
<dbReference type="RNAct" id="Q2LD37">
    <property type="molecule type" value="protein"/>
</dbReference>
<dbReference type="Bgee" id="ENSG00000138688">
    <property type="expression patterns" value="Expressed in Brodmann (1909) area 23 and 213 other cell types or tissues"/>
</dbReference>
<dbReference type="ExpressionAtlas" id="Q2LD37">
    <property type="expression patterns" value="baseline and differential"/>
</dbReference>
<dbReference type="GO" id="GO:0005789">
    <property type="term" value="C:endoplasmic reticulum membrane"/>
    <property type="evidence" value="ECO:0007669"/>
    <property type="project" value="UniProtKB-SubCell"/>
</dbReference>
<dbReference type="GO" id="GO:0140268">
    <property type="term" value="C:endoplasmic reticulum-plasma membrane contact site"/>
    <property type="evidence" value="ECO:0000250"/>
    <property type="project" value="UniProtKB"/>
</dbReference>
<dbReference type="GO" id="GO:0016020">
    <property type="term" value="C:membrane"/>
    <property type="evidence" value="ECO:0000303"/>
    <property type="project" value="BHF-UCL"/>
</dbReference>
<dbReference type="GO" id="GO:0031966">
    <property type="term" value="C:mitochondrial membrane"/>
    <property type="evidence" value="ECO:0007669"/>
    <property type="project" value="UniProtKB-SubCell"/>
</dbReference>
<dbReference type="GO" id="GO:0005634">
    <property type="term" value="C:nucleus"/>
    <property type="evidence" value="ECO:0000303"/>
    <property type="project" value="BHF-UCL"/>
</dbReference>
<dbReference type="GO" id="GO:0005886">
    <property type="term" value="C:plasma membrane"/>
    <property type="evidence" value="ECO:0007669"/>
    <property type="project" value="UniProtKB-SubCell"/>
</dbReference>
<dbReference type="GO" id="GO:0098793">
    <property type="term" value="C:presynapse"/>
    <property type="evidence" value="ECO:0007669"/>
    <property type="project" value="GOC"/>
</dbReference>
<dbReference type="GO" id="GO:1904121">
    <property type="term" value="F:phosphatidylethanolamine transfer activity"/>
    <property type="evidence" value="ECO:0000250"/>
    <property type="project" value="UniProtKB"/>
</dbReference>
<dbReference type="GO" id="GO:0032456">
    <property type="term" value="P:endocytic recycling"/>
    <property type="evidence" value="ECO:0000315"/>
    <property type="project" value="UniProtKB"/>
</dbReference>
<dbReference type="GO" id="GO:0016197">
    <property type="term" value="P:endosomal transport"/>
    <property type="evidence" value="ECO:0000315"/>
    <property type="project" value="UniProtKB"/>
</dbReference>
<dbReference type="GO" id="GO:0120009">
    <property type="term" value="P:intermembrane lipid transfer"/>
    <property type="evidence" value="ECO:0000250"/>
    <property type="project" value="UniProtKB"/>
</dbReference>
<dbReference type="GO" id="GO:0006909">
    <property type="term" value="P:phagocytosis"/>
    <property type="evidence" value="ECO:0000315"/>
    <property type="project" value="UniProtKB"/>
</dbReference>
<dbReference type="GO" id="GO:0001558">
    <property type="term" value="P:regulation of cell growth"/>
    <property type="evidence" value="ECO:0000303"/>
    <property type="project" value="BHF-UCL"/>
</dbReference>
<dbReference type="GO" id="GO:0030856">
    <property type="term" value="P:regulation of epithelial cell differentiation"/>
    <property type="evidence" value="ECO:0000303"/>
    <property type="project" value="BHF-UCL"/>
</dbReference>
<dbReference type="GO" id="GO:0048488">
    <property type="term" value="P:synaptic vesicle endocytosis"/>
    <property type="evidence" value="ECO:0000318"/>
    <property type="project" value="GO_Central"/>
</dbReference>
<dbReference type="InterPro" id="IPR033616">
    <property type="entry name" value="BLTP1"/>
</dbReference>
<dbReference type="InterPro" id="IPR056742">
    <property type="entry name" value="BLTP1_C"/>
</dbReference>
<dbReference type="InterPro" id="IPR056741">
    <property type="entry name" value="BLTP1_M"/>
</dbReference>
<dbReference type="InterPro" id="IPR047104">
    <property type="entry name" value="BLTP1_N"/>
</dbReference>
<dbReference type="PANTHER" id="PTHR31640:SF1">
    <property type="entry name" value="BRIDGE-LIKE LIPID TRANSFER PROTEIN FAMILY MEMBER 1"/>
    <property type="match status" value="1"/>
</dbReference>
<dbReference type="PANTHER" id="PTHR31640">
    <property type="entry name" value="TRANSMEMBRANE PROTEIN KIAA1109"/>
    <property type="match status" value="1"/>
</dbReference>
<dbReference type="Pfam" id="PF25040">
    <property type="entry name" value="BLTP1_C"/>
    <property type="match status" value="1"/>
</dbReference>
<dbReference type="Pfam" id="PF25039">
    <property type="entry name" value="BLTP1_M"/>
    <property type="match status" value="1"/>
</dbReference>
<dbReference type="Pfam" id="PF20413">
    <property type="entry name" value="BLTP1_N"/>
    <property type="match status" value="1"/>
</dbReference>
<dbReference type="SMART" id="SM01220">
    <property type="entry name" value="FSA_C"/>
    <property type="match status" value="1"/>
</dbReference>
<reference key="1">
    <citation type="journal article" date="2006" name="Gene">
        <title>Molecular cloning of Chinese hamster 1q31 chromosomal fragile site DNA that is important to mdr1 gene amplification reveals a novel gene whose expression is associated with spermatocyte and adipocyte differentiation.</title>
        <authorList>
            <person name="Wei Y."/>
            <person name="Lin-Lee Y.-C."/>
            <person name="Yang X."/>
            <person name="Dai W."/>
            <person name="Zhao S."/>
            <person name="Rassool F.V."/>
            <person name="Elgart G.W."/>
            <person name="Feun L."/>
            <person name="Savaraj N."/>
            <person name="Kuo M.T."/>
        </authorList>
    </citation>
    <scope>NUCLEOTIDE SEQUENCE [MRNA] (ISOFORM 1)</scope>
    <scope>TISSUE SPECIFICITY</scope>
</reference>
<reference key="2">
    <citation type="journal article" date="2005" name="Nature">
        <title>Generation and annotation of the DNA sequences of human chromosomes 2 and 4.</title>
        <authorList>
            <person name="Hillier L.W."/>
            <person name="Graves T.A."/>
            <person name="Fulton R.S."/>
            <person name="Fulton L.A."/>
            <person name="Pepin K.H."/>
            <person name="Minx P."/>
            <person name="Wagner-McPherson C."/>
            <person name="Layman D."/>
            <person name="Wylie K."/>
            <person name="Sekhon M."/>
            <person name="Becker M.C."/>
            <person name="Fewell G.A."/>
            <person name="Delehaunty K.D."/>
            <person name="Miner T.L."/>
            <person name="Nash W.E."/>
            <person name="Kremitzki C."/>
            <person name="Oddy L."/>
            <person name="Du H."/>
            <person name="Sun H."/>
            <person name="Bradshaw-Cordum H."/>
            <person name="Ali J."/>
            <person name="Carter J."/>
            <person name="Cordes M."/>
            <person name="Harris A."/>
            <person name="Isak A."/>
            <person name="van Brunt A."/>
            <person name="Nguyen C."/>
            <person name="Du F."/>
            <person name="Courtney L."/>
            <person name="Kalicki J."/>
            <person name="Ozersky P."/>
            <person name="Abbott S."/>
            <person name="Armstrong J."/>
            <person name="Belter E.A."/>
            <person name="Caruso L."/>
            <person name="Cedroni M."/>
            <person name="Cotton M."/>
            <person name="Davidson T."/>
            <person name="Desai A."/>
            <person name="Elliott G."/>
            <person name="Erb T."/>
            <person name="Fronick C."/>
            <person name="Gaige T."/>
            <person name="Haakenson W."/>
            <person name="Haglund K."/>
            <person name="Holmes A."/>
            <person name="Harkins R."/>
            <person name="Kim K."/>
            <person name="Kruchowski S.S."/>
            <person name="Strong C.M."/>
            <person name="Grewal N."/>
            <person name="Goyea E."/>
            <person name="Hou S."/>
            <person name="Levy A."/>
            <person name="Martinka S."/>
            <person name="Mead K."/>
            <person name="McLellan M.D."/>
            <person name="Meyer R."/>
            <person name="Randall-Maher J."/>
            <person name="Tomlinson C."/>
            <person name="Dauphin-Kohlberg S."/>
            <person name="Kozlowicz-Reilly A."/>
            <person name="Shah N."/>
            <person name="Swearengen-Shahid S."/>
            <person name="Snider J."/>
            <person name="Strong J.T."/>
            <person name="Thompson J."/>
            <person name="Yoakum M."/>
            <person name="Leonard S."/>
            <person name="Pearman C."/>
            <person name="Trani L."/>
            <person name="Radionenko M."/>
            <person name="Waligorski J.E."/>
            <person name="Wang C."/>
            <person name="Rock S.M."/>
            <person name="Tin-Wollam A.-M."/>
            <person name="Maupin R."/>
            <person name="Latreille P."/>
            <person name="Wendl M.C."/>
            <person name="Yang S.-P."/>
            <person name="Pohl C."/>
            <person name="Wallis J.W."/>
            <person name="Spieth J."/>
            <person name="Bieri T.A."/>
            <person name="Berkowicz N."/>
            <person name="Nelson J.O."/>
            <person name="Osborne J."/>
            <person name="Ding L."/>
            <person name="Meyer R."/>
            <person name="Sabo A."/>
            <person name="Shotland Y."/>
            <person name="Sinha P."/>
            <person name="Wohldmann P.E."/>
            <person name="Cook L.L."/>
            <person name="Hickenbotham M.T."/>
            <person name="Eldred J."/>
            <person name="Williams D."/>
            <person name="Jones T.A."/>
            <person name="She X."/>
            <person name="Ciccarelli F.D."/>
            <person name="Izaurralde E."/>
            <person name="Taylor J."/>
            <person name="Schmutz J."/>
            <person name="Myers R.M."/>
            <person name="Cox D.R."/>
            <person name="Huang X."/>
            <person name="McPherson J.D."/>
            <person name="Mardis E.R."/>
            <person name="Clifton S.W."/>
            <person name="Warren W.C."/>
            <person name="Chinwalla A.T."/>
            <person name="Eddy S.R."/>
            <person name="Marra M.A."/>
            <person name="Ovcharenko I."/>
            <person name="Furey T.S."/>
            <person name="Miller W."/>
            <person name="Eichler E.E."/>
            <person name="Bork P."/>
            <person name="Suyama M."/>
            <person name="Torrents D."/>
            <person name="Waterston R.H."/>
            <person name="Wilson R.K."/>
        </authorList>
    </citation>
    <scope>NUCLEOTIDE SEQUENCE [LARGE SCALE GENOMIC DNA]</scope>
</reference>
<reference key="3">
    <citation type="journal article" date="2004" name="Nat. Genet.">
        <title>Complete sequencing and characterization of 21,243 full-length human cDNAs.</title>
        <authorList>
            <person name="Ota T."/>
            <person name="Suzuki Y."/>
            <person name="Nishikawa T."/>
            <person name="Otsuki T."/>
            <person name="Sugiyama T."/>
            <person name="Irie R."/>
            <person name="Wakamatsu A."/>
            <person name="Hayashi K."/>
            <person name="Sato H."/>
            <person name="Nagai K."/>
            <person name="Kimura K."/>
            <person name="Makita H."/>
            <person name="Sekine M."/>
            <person name="Obayashi M."/>
            <person name="Nishi T."/>
            <person name="Shibahara T."/>
            <person name="Tanaka T."/>
            <person name="Ishii S."/>
            <person name="Yamamoto J."/>
            <person name="Saito K."/>
            <person name="Kawai Y."/>
            <person name="Isono Y."/>
            <person name="Nakamura Y."/>
            <person name="Nagahari K."/>
            <person name="Murakami K."/>
            <person name="Yasuda T."/>
            <person name="Iwayanagi T."/>
            <person name="Wagatsuma M."/>
            <person name="Shiratori A."/>
            <person name="Sudo H."/>
            <person name="Hosoiri T."/>
            <person name="Kaku Y."/>
            <person name="Kodaira H."/>
            <person name="Kondo H."/>
            <person name="Sugawara M."/>
            <person name="Takahashi M."/>
            <person name="Kanda K."/>
            <person name="Yokoi T."/>
            <person name="Furuya T."/>
            <person name="Kikkawa E."/>
            <person name="Omura Y."/>
            <person name="Abe K."/>
            <person name="Kamihara K."/>
            <person name="Katsuta N."/>
            <person name="Sato K."/>
            <person name="Tanikawa M."/>
            <person name="Yamazaki M."/>
            <person name="Ninomiya K."/>
            <person name="Ishibashi T."/>
            <person name="Yamashita H."/>
            <person name="Murakawa K."/>
            <person name="Fujimori K."/>
            <person name="Tanai H."/>
            <person name="Kimata M."/>
            <person name="Watanabe M."/>
            <person name="Hiraoka S."/>
            <person name="Chiba Y."/>
            <person name="Ishida S."/>
            <person name="Ono Y."/>
            <person name="Takiguchi S."/>
            <person name="Watanabe S."/>
            <person name="Yosida M."/>
            <person name="Hotuta T."/>
            <person name="Kusano J."/>
            <person name="Kanehori K."/>
            <person name="Takahashi-Fujii A."/>
            <person name="Hara H."/>
            <person name="Tanase T.-O."/>
            <person name="Nomura Y."/>
            <person name="Togiya S."/>
            <person name="Komai F."/>
            <person name="Hara R."/>
            <person name="Takeuchi K."/>
            <person name="Arita M."/>
            <person name="Imose N."/>
            <person name="Musashino K."/>
            <person name="Yuuki H."/>
            <person name="Oshima A."/>
            <person name="Sasaki N."/>
            <person name="Aotsuka S."/>
            <person name="Yoshikawa Y."/>
            <person name="Matsunawa H."/>
            <person name="Ichihara T."/>
            <person name="Shiohata N."/>
            <person name="Sano S."/>
            <person name="Moriya S."/>
            <person name="Momiyama H."/>
            <person name="Satoh N."/>
            <person name="Takami S."/>
            <person name="Terashima Y."/>
            <person name="Suzuki O."/>
            <person name="Nakagawa S."/>
            <person name="Senoh A."/>
            <person name="Mizoguchi H."/>
            <person name="Goto Y."/>
            <person name="Shimizu F."/>
            <person name="Wakebe H."/>
            <person name="Hishigaki H."/>
            <person name="Watanabe T."/>
            <person name="Sugiyama A."/>
            <person name="Takemoto M."/>
            <person name="Kawakami B."/>
            <person name="Yamazaki M."/>
            <person name="Watanabe K."/>
            <person name="Kumagai A."/>
            <person name="Itakura S."/>
            <person name="Fukuzumi Y."/>
            <person name="Fujimori Y."/>
            <person name="Komiyama M."/>
            <person name="Tashiro H."/>
            <person name="Tanigami A."/>
            <person name="Fujiwara T."/>
            <person name="Ono T."/>
            <person name="Yamada K."/>
            <person name="Fujii Y."/>
            <person name="Ozaki K."/>
            <person name="Hirao M."/>
            <person name="Ohmori Y."/>
            <person name="Kawabata A."/>
            <person name="Hikiji T."/>
            <person name="Kobatake N."/>
            <person name="Inagaki H."/>
            <person name="Ikema Y."/>
            <person name="Okamoto S."/>
            <person name="Okitani R."/>
            <person name="Kawakami T."/>
            <person name="Noguchi S."/>
            <person name="Itoh T."/>
            <person name="Shigeta K."/>
            <person name="Senba T."/>
            <person name="Matsumura K."/>
            <person name="Nakajima Y."/>
            <person name="Mizuno T."/>
            <person name="Morinaga M."/>
            <person name="Sasaki M."/>
            <person name="Togashi T."/>
            <person name="Oyama M."/>
            <person name="Hata H."/>
            <person name="Watanabe M."/>
            <person name="Komatsu T."/>
            <person name="Mizushima-Sugano J."/>
            <person name="Satoh T."/>
            <person name="Shirai Y."/>
            <person name="Takahashi Y."/>
            <person name="Nakagawa K."/>
            <person name="Okumura K."/>
            <person name="Nagase T."/>
            <person name="Nomura N."/>
            <person name="Kikuchi H."/>
            <person name="Masuho Y."/>
            <person name="Yamashita R."/>
            <person name="Nakai K."/>
            <person name="Yada T."/>
            <person name="Nakamura Y."/>
            <person name="Ohara O."/>
            <person name="Isogai T."/>
            <person name="Sugano S."/>
        </authorList>
    </citation>
    <scope>NUCLEOTIDE SEQUENCE [LARGE SCALE MRNA] OF 169-1415 (ISOFORM 4)</scope>
    <scope>NUCLEOTIDE SEQUENCE [LARGE SCALE MRNA] OF 2251-5005 (ISOFORM 2)</scope>
    <source>
        <tissue>Colon</tissue>
        <tissue>Hippocampus</tissue>
        <tissue>Neutrophil</tissue>
    </source>
</reference>
<reference key="4">
    <citation type="journal article" date="2000" name="DNA Res.">
        <title>Prediction of the coding sequences of unidentified human genes. XVI. The complete sequences of 150 new cDNA clones from brain which code for large proteins in vitro.</title>
        <authorList>
            <person name="Nagase T."/>
            <person name="Kikuno R."/>
            <person name="Ishikawa K."/>
            <person name="Hirosawa M."/>
            <person name="Ohara O."/>
        </authorList>
    </citation>
    <scope>NUCLEOTIDE SEQUENCE [LARGE SCALE MRNA] OF 590-5005 (ISOFORM 5)</scope>
    <source>
        <tissue>Brain</tissue>
    </source>
</reference>
<reference key="5">
    <citation type="journal article" date="2007" name="BMC Genomics">
        <title>The full-ORF clone resource of the German cDNA consortium.</title>
        <authorList>
            <person name="Bechtel S."/>
            <person name="Rosenfelder H."/>
            <person name="Duda A."/>
            <person name="Schmidt C.P."/>
            <person name="Ernst U."/>
            <person name="Wellenreuther R."/>
            <person name="Mehrle A."/>
            <person name="Schuster C."/>
            <person name="Bahr A."/>
            <person name="Bloecker H."/>
            <person name="Heubner D."/>
            <person name="Hoerlein A."/>
            <person name="Michel G."/>
            <person name="Wedler H."/>
            <person name="Koehrer K."/>
            <person name="Ottenwaelder B."/>
            <person name="Poustka A."/>
            <person name="Wiemann S."/>
            <person name="Schupp I."/>
        </authorList>
    </citation>
    <scope>NUCLEOTIDE SEQUENCE [LARGE SCALE MRNA] OF 1429-5005 (ISOFORM 2)</scope>
    <scope>NUCLEOTIDE SEQUENCE [LARGE SCALE MRNA] OF 2044-5005 (ISOFORM 6)</scope>
    <scope>NUCLEOTIDE SEQUENCE [LARGE SCALE MRNA] OF 4056-5005</scope>
    <scope>NUCLEOTIDE SEQUENCE [LARGE SCALE MRNA] OF 4245-5005</scope>
    <source>
        <tissue>Seminoma</tissue>
        <tissue>Testis</tissue>
    </source>
</reference>
<reference key="6">
    <citation type="journal article" date="1999" name="DNA Res.">
        <title>Prediction of the coding sequences of unidentified human genes. XIV. The complete sequences of 100 new cDNA clones from brain which code for large proteins in vitro.</title>
        <authorList>
            <person name="Kikuno R."/>
            <person name="Nagase T."/>
            <person name="Ishikawa K."/>
            <person name="Hirosawa M."/>
            <person name="Miyajima N."/>
            <person name="Tanaka A."/>
            <person name="Kotani H."/>
            <person name="Nomura N."/>
            <person name="Ohara O."/>
        </authorList>
    </citation>
    <scope>NUCLEOTIDE SEQUENCE [LARGE SCALE MRNA] OF 1920-5005 (ISOFORM 1)</scope>
    <source>
        <tissue>Brain</tissue>
    </source>
</reference>
<reference key="7">
    <citation type="journal article" date="2002" name="DNA Res.">
        <title>Construction of expression-ready cDNA clones for KIAA genes: manual curation of 330 KIAA cDNA clones.</title>
        <authorList>
            <person name="Nakajima D."/>
            <person name="Okazaki N."/>
            <person name="Yamakawa H."/>
            <person name="Kikuno R."/>
            <person name="Ohara O."/>
            <person name="Nagase T."/>
        </authorList>
    </citation>
    <scope>SEQUENCE REVISION</scope>
</reference>
<reference key="8">
    <citation type="journal article" date="2004" name="Genome Res.">
        <title>The status, quality, and expansion of the NIH full-length cDNA project: the Mammalian Gene Collection (MGC).</title>
        <authorList>
            <consortium name="The MGC Project Team"/>
        </authorList>
    </citation>
    <scope>NUCLEOTIDE SEQUENCE [LARGE SCALE MRNA] OF 4667-5005</scope>
    <source>
        <tissue>Brain</tissue>
        <tissue>Skin</tissue>
    </source>
</reference>
<reference key="9">
    <citation type="journal article" date="2006" name="Cell">
        <title>Global, in vivo, and site-specific phosphorylation dynamics in signaling networks.</title>
        <authorList>
            <person name="Olsen J.V."/>
            <person name="Blagoev B."/>
            <person name="Gnad F."/>
            <person name="Macek B."/>
            <person name="Kumar C."/>
            <person name="Mortensen P."/>
            <person name="Mann M."/>
        </authorList>
    </citation>
    <scope>IDENTIFICATION BY MASS SPECTROMETRY [LARGE SCALE ANALYSIS]</scope>
    <source>
        <tissue>Cervix carcinoma</tissue>
    </source>
</reference>
<reference key="10">
    <citation type="journal article" date="2007" name="Nat. Genet.">
        <title>A genome-wide association study for celiac disease identifies risk variants in the region harboring IL2 and IL21.</title>
        <authorList>
            <person name="van Heel D.A."/>
            <person name="Franke L."/>
            <person name="Hunt K.A."/>
            <person name="Gwilliam R."/>
            <person name="Zhernakova A."/>
            <person name="Inouye M."/>
            <person name="Wapenaar M.C."/>
            <person name="Barnardo M.C.N.M."/>
            <person name="Bethel G."/>
            <person name="Holmes G.K.T."/>
            <person name="Feighery C."/>
            <person name="Jewell D."/>
            <person name="Kelleher D."/>
            <person name="Kumar P."/>
            <person name="Travis S."/>
            <person name="Walters J.R.F."/>
            <person name="Sanders D.S."/>
            <person name="Howdle P."/>
            <person name="Swift J."/>
            <person name="Playford R.J."/>
            <person name="McLaren W.M."/>
            <person name="Mearin M.L."/>
            <person name="Mulder C.J."/>
            <person name="McManus R."/>
            <person name="McGinnis R."/>
            <person name="Cardon L.R."/>
            <person name="Deloukas P."/>
            <person name="Wijmenga C."/>
        </authorList>
    </citation>
    <scope>POSSIBLE SUSCEPTIBILITY TO CELIAC6</scope>
</reference>
<reference key="11">
    <citation type="journal article" date="2011" name="Sci. Signal.">
        <title>System-wide temporal characterization of the proteome and phosphoproteome of human embryonic stem cell differentiation.</title>
        <authorList>
            <person name="Rigbolt K.T."/>
            <person name="Prokhorova T.A."/>
            <person name="Akimov V."/>
            <person name="Henningsen J."/>
            <person name="Johansen P.T."/>
            <person name="Kratchmarova I."/>
            <person name="Kassem M."/>
            <person name="Mann M."/>
            <person name="Olsen J.V."/>
            <person name="Blagoev B."/>
        </authorList>
    </citation>
    <scope>PHOSPHORYLATION [LARGE SCALE ANALYSIS] AT SER-1301 AND SER-1305</scope>
    <scope>IDENTIFICATION BY MASS SPECTROMETRY [LARGE SCALE ANALYSIS]</scope>
</reference>
<reference key="12">
    <citation type="journal article" date="2013" name="J. Proteome Res.">
        <title>Toward a comprehensive characterization of a human cancer cell phosphoproteome.</title>
        <authorList>
            <person name="Zhou H."/>
            <person name="Di Palma S."/>
            <person name="Preisinger C."/>
            <person name="Peng M."/>
            <person name="Polat A.N."/>
            <person name="Heck A.J."/>
            <person name="Mohammed S."/>
        </authorList>
    </citation>
    <scope>PHOSPHORYLATION [LARGE SCALE ANALYSIS] AT SER-1323; THR-1325; SER-1355; SER-2603; SER-2755; SER-3562 AND SER-4124</scope>
    <scope>IDENTIFICATION BY MASS SPECTROMETRY [LARGE SCALE ANALYSIS]</scope>
    <source>
        <tissue>Cervix carcinoma</tissue>
        <tissue>Erythroleukemia</tissue>
    </source>
</reference>
<reference key="13">
    <citation type="journal article" date="2014" name="J. Proteomics">
        <title>An enzyme assisted RP-RPLC approach for in-depth analysis of human liver phosphoproteome.</title>
        <authorList>
            <person name="Bian Y."/>
            <person name="Song C."/>
            <person name="Cheng K."/>
            <person name="Dong M."/>
            <person name="Wang F."/>
            <person name="Huang J."/>
            <person name="Sun D."/>
            <person name="Wang L."/>
            <person name="Ye M."/>
            <person name="Zou H."/>
        </authorList>
    </citation>
    <scope>PHOSPHORYLATION [LARGE SCALE ANALYSIS] AT SER-1406</scope>
    <scope>IDENTIFICATION BY MASS SPECTROMETRY [LARGE SCALE ANALYSIS]</scope>
    <source>
        <tissue>Liver</tissue>
    </source>
</reference>
<reference key="14">
    <citation type="journal article" date="2019" name="Cell Host Microbe">
        <title>Systematic Identification of Host Cell Regulators of Legionella pneumophila Pathogenesis Using a Genome-wide CRISPR Screen.</title>
        <authorList>
            <person name="Jeng E.E."/>
            <person name="Bhadkamkar V."/>
            <person name="Ibe N.U."/>
            <person name="Gause H."/>
            <person name="Jiang L."/>
            <person name="Chan J."/>
            <person name="Jian R."/>
            <person name="Jimenez-Morales D."/>
            <person name="Stevenson E."/>
            <person name="Krogan N.J."/>
            <person name="Swaney D.L."/>
            <person name="Snyder M.P."/>
            <person name="Mukherjee S."/>
            <person name="Bassik M.C."/>
        </authorList>
    </citation>
    <scope>FUNCTION</scope>
</reference>
<reference key="15">
    <citation type="journal article" date="2022" name="J. Cell Biol.">
        <title>Vps13-like proteins provide phosphatidylethanolamine for GPI anchor synthesis in the ER.</title>
        <authorList>
            <person name="Toulmay A."/>
            <person name="Whittle F.B."/>
            <person name="Yang J."/>
            <person name="Bai X."/>
            <person name="Diarra J."/>
            <person name="Banerjee S."/>
            <person name="Levine T.P."/>
            <person name="Golden A."/>
            <person name="Prinz W.A."/>
        </authorList>
    </citation>
    <scope>FUNCTION</scope>
    <scope>SUBCELLULAR LOCATION</scope>
</reference>
<reference key="16">
    <citation type="journal article" date="2022" name="Trends Cell Biol.">
        <title>A novel superfamily of bridge-like lipid transfer proteins.</title>
        <authorList>
            <person name="Neuman S.D."/>
            <person name="Levine T.P."/>
            <person name="Bashirullah A."/>
        </authorList>
    </citation>
    <scope>REVIEW OF FUNCTION</scope>
</reference>
<reference key="17">
    <citation type="journal article" date="2015" name="Cell Rep.">
        <title>Accelerating novel candidate gene discovery in neurogenetic disorders via whole-exome sequencing of prescreened multiplex consanguineous families.</title>
        <authorList>
            <person name="Alazami A.M."/>
            <person name="Patel N."/>
            <person name="Shamseldin H.E."/>
            <person name="Anazi S."/>
            <person name="Al-Dosari M.S."/>
            <person name="Alzahrani F."/>
            <person name="Hijazi H."/>
            <person name="Alshammari M."/>
            <person name="Aldahmesh M.A."/>
            <person name="Salih M.A."/>
            <person name="Faqeih E."/>
            <person name="Alhashem A."/>
            <person name="Bashiri F.A."/>
            <person name="Al-Owain M."/>
            <person name="Kentab A.Y."/>
            <person name="Sogaty S."/>
            <person name="Al Tala S."/>
            <person name="Temsah M.H."/>
            <person name="Tulbah M."/>
            <person name="Aljelaify R.F."/>
            <person name="Alshahwan S.A."/>
            <person name="Seidahmed M.Z."/>
            <person name="Alhadid A.A."/>
            <person name="Aldhalaan H."/>
            <person name="Alqallaf F."/>
            <person name="Kurdi W."/>
            <person name="Alfadhel M."/>
            <person name="Babay Z."/>
            <person name="Alsogheer M."/>
            <person name="Kaya N."/>
            <person name="Al-Hassnan Z.N."/>
            <person name="Abdel-Salam G.M."/>
            <person name="Al-Sannaa N."/>
            <person name="Al Mutairi F."/>
            <person name="El Khashab H.Y."/>
            <person name="Bohlega S."/>
            <person name="Jia X."/>
            <person name="Nguyen H.C."/>
            <person name="Hammami R."/>
            <person name="Adly N."/>
            <person name="Mohamed J.Y."/>
            <person name="Abdulwahab F."/>
            <person name="Ibrahim N."/>
            <person name="Naim E.A."/>
            <person name="Al-Younes B."/>
            <person name="Meyer B.F."/>
            <person name="Hashem M."/>
            <person name="Shaheen R."/>
            <person name="Xiong Y."/>
            <person name="Abouelhoda M."/>
            <person name="Aldeeri A.A."/>
            <person name="Monies D.M."/>
            <person name="Alkuraya F.S."/>
        </authorList>
    </citation>
    <scope>VARIANT ALKKUCS 519-TYR--HIS-5005 DEL</scope>
</reference>
<reference key="18">
    <citation type="journal article" date="2018" name="Am. J. Hum. Genet.">
        <title>KIAA1109 Variants Are Associated with a Severe Disorder of Brain Development and Arthrogryposis.</title>
        <authorList>
            <consortium name="DDD Study"/>
            <person name="Gueneau L."/>
            <person name="Fish R.J."/>
            <person name="Shamseldin H.E."/>
            <person name="Voisin N."/>
            <person name="Tran Mau-Them F."/>
            <person name="Preiksaitiene E."/>
            <person name="Monroe G.R."/>
            <person name="Lai A."/>
            <person name="Putoux A."/>
            <person name="Allias F."/>
            <person name="Ambusaidi Q."/>
            <person name="Ambrozaityte L."/>
            <person name="Cimbalistiene L."/>
            <person name="Delafontaine J."/>
            <person name="Guex N."/>
            <person name="Hashem M."/>
            <person name="Kurdi W."/>
            <person name="Jamuar S.S."/>
            <person name="Ying L.J."/>
            <person name="Bonnard C."/>
            <person name="Pippucci T."/>
            <person name="Pradervand S."/>
            <person name="Roechert B."/>
            <person name="van Hasselt P.M."/>
            <person name="Wiederkehr M."/>
            <person name="Wright C.F."/>
            <person name="Xenarios I."/>
            <person name="van Haaften G."/>
            <person name="Shaw-Smith C."/>
            <person name="Schindewolf E.M."/>
            <person name="Neerman-Arbez M."/>
            <person name="Sanlaville D."/>
            <person name="Lesca G."/>
            <person name="Guibaud L."/>
            <person name="Reversade B."/>
            <person name="Chelly J."/>
            <person name="Kucinskas V."/>
            <person name="Alkuraya F.S."/>
            <person name="Reymond A."/>
        </authorList>
    </citation>
    <scope>INVOLVEMENT IN ALKKUCS</scope>
    <scope>VARIANTS ALKKUCS 519-TYR--HIS-5005 DEL; CYS-968; CYS-1329; ILE-1573; MET-1867; GLN-1958; HIS-3050; ARG-3385 AND 4023-GLU--HIS-5005 DEL</scope>
</reference>
<reference key="19">
    <citation type="journal article" date="2019" name="Clin. Genet.">
        <title>Novel KIAA1109 variants affecting splicing in a Russian family with ALKURAYA-KUCINSKAS syndrome.</title>
        <authorList>
            <person name="Filatova A."/>
            <person name="Freire V."/>
            <person name="Lozier E."/>
            <person name="Konovalov F."/>
            <person name="Bessonova L."/>
            <person name="Iudina E."/>
            <person name="Gnetetskaya V."/>
            <person name="Kanivets I."/>
            <person name="Korostelev S."/>
            <person name="Skoblov M."/>
        </authorList>
    </citation>
    <scope>VARIANT ALKKUCS 825-VAL--GLN-872 DEL</scope>
</reference>
<reference key="20">
    <citation type="journal article" date="2019" name="Genes Dis.">
        <title>Endosomal trafficking defects in patient cells with KIAA1109 biallelic variants.</title>
        <authorList>
            <person name="Kane M.S."/>
            <person name="Diamonstein C.J."/>
            <person name="Hauser N."/>
            <person name="Deeken J.F."/>
            <person name="Niederhuber J.E."/>
            <person name="Vilboux T."/>
        </authorList>
    </citation>
    <scope>VARIANTS ALKKUCS LYS-216; GLY-228 AND 4375-ARG--HIS-5005 DEL</scope>
    <scope>FUNCTION</scope>
</reference>
<reference key="21">
    <citation type="journal article" date="2020" name="Clin. Dysmorphol.">
        <title>Two novel pathogenic variants in KIAA1109 causing Alkuraya-Kucinskas syndrome in two Czech Roma brothers.</title>
        <authorList>
            <person name="Meszarosova A.U."/>
            <person name="Lastuvkova J."/>
            <person name="Rennerova L."/>
            <person name="Hitka P."/>
            <person name="Cihlar F."/>
            <person name="Seeman P."/>
            <person name="Safka Brozkova D."/>
        </authorList>
    </citation>
    <scope>INVOLVEMENT IN ALKKUCS</scope>
</reference>
<organism>
    <name type="scientific">Homo sapiens</name>
    <name type="common">Human</name>
    <dbReference type="NCBI Taxonomy" id="9606"/>
    <lineage>
        <taxon>Eukaryota</taxon>
        <taxon>Metazoa</taxon>
        <taxon>Chordata</taxon>
        <taxon>Craniata</taxon>
        <taxon>Vertebrata</taxon>
        <taxon>Euteleostomi</taxon>
        <taxon>Mammalia</taxon>
        <taxon>Eutheria</taxon>
        <taxon>Euarchontoglires</taxon>
        <taxon>Primates</taxon>
        <taxon>Haplorrhini</taxon>
        <taxon>Catarrhini</taxon>
        <taxon>Hominidae</taxon>
        <taxon>Homo</taxon>
    </lineage>
</organism>
<sequence>MDQRKNESIVPSITQLEDFLTEHNSNVVWLLVATILSCGWIIYLTYYNSRNVGLILTLVLNRLYKHGYIHIGSFSFSVLSGKVMVREIYYITEDMSIRIQDGFIIFRWWKMYNPKQKQHDPKAETRLYITVNDFEFHVYNRSDLYGRLQELFGLEPTIIPPKKDDDKTREIGRTRTQSKIERVKVKTESQDPTSSWRSLIPVIKVNVSTGRLAFGNHYQPQTLCINFDDAFLTYTTKPPSSHLDQFMHIVKGKLENVRVMLVPSPRYVGLQNDEPPRLMGEGFVVMQSNDVDIYYYMDEPGLVPEETEENIEGEMSSEDCKLQDLPPCWGLDIVCGKGTDFNYGPWADRQRDCLWKFFFPPDYQVLKVSEIAQPGRPRQILAFELRMNIIADATIDLLFTKNRETNAVHVNVGAGSYLEINIPMTVEENGYTPAIKGQLLHVDATTSMQYRTLLEAEMLAFHINASYPRIWNMPQTWQCELEVYKATYHFIFAQKNFFTDLIQDWSSDSPPDIFSFVPYTWNFKIMFHQFEMIWAANQHNWIDCSTKQQENVYLAACGETLNIDFSLPFTDFVPATCNTKFSLRGEDVDLHLFLPDCHPSKYSLFMLVKNCHPNKMIHDTGIPAECQSGQKTVKPKWRNVTQEKSGWVECWTVPSVMLTIDYTWHPIYPQKADEQLKQSLSEMEETMLSVLRPSQKTSDRVVSSPSTSSRPPIDPSELPPDKLHVEMELSPDSQITLYGPLLNAFLCIKENYFGEDDMYMDFEEVISSPVLSLSTSSSSGWTAVGMENDKKENEGSAKSIHPLALRPWDITVLVNLYKVHGRLPVHGTTDGPECPTAFLERLCFEMKKGFRETMLQLILSPLNVFVSDNYQQRPPVDEVLREGHINLSGLQLRAHAMFSAEGLPLGSDSLEYAWLIDVQAGSLTAKVTAPQLACLLEWGQTFVFHVVCREYELERPKSVIICQHGIDRRFCESKLSCIPGPCPTSDDLKYTMIRLAVDGADIYIVEHGCATNIKMGAIRVANCNLHNQSVGEGISAAIQDFQVRQYIEQLNNCRIGLQPAVLRRAYWLEAGSANLGLITVDIALAADHHSKHEAQRHFLETHDARTKRLWFLWPDDILKNKRCRNKCGCLGGCRFFGGTVTGLDFFKLEELTPSSSSAFSSTSAESDMYYGQSLLQPGEWIITKEIPKIIDGNVNGMKRKEWENKSVGIEVERKTQHLSLQVPLRSHSSSSSSEENSSSSAAQPLLAGEKESPSSVADDHLVQKEFLHGTKRDDGQASIPTEISGNSPVSPNTQDKSVGQSPLRSPLKRQASVCSTRLGSTKSLTAAFYGDKQPVTVGVQFSSDVSRSDENVLDSPKQRRSFGSFPYTPSADSNSFHQYRSMDSSMSMADSEAYFSAAEEFEPISSDEGPGTYPGRKKKKKQTQQIDYSRGSIYHSVEGPLTGHGESIQDSRTLPFKTHPSQASFVSALGGEDDVIEHLYIVEGEKTVESEQITPQQPVMNCYQTYLTQFQVINWSVKHPTNKRTSKSSLHRPLDLDTPTSEESSSSFEQLSVPTFKVIKQGLTANSLLDRGMQLSGSTSNTPYTPLEKKLADNTDDETLTEEWTLDQPVSQTRTTAIVEVKGTVDIVLTPLVAEALDRYIEAMVHCASTRHPAAIVDDLHAKVLREAVQNSKTTFSENLSSKQDIRGTKTEQSTIGTTNQGQAQTNLTMKQDNVTIKGLQTNVSIPKVNLCLLQASVEESPTTAPSRSVTHVSLVALCFDRIATQVRMNRGVVEETSNNAEPGRTSNFDRYVHATKMQPQSSGSLRSNAGAEKGKEIAAKLNIHRVHGQLRGLDTTDIGTCAITAIPFEKSKVLFTLEELDEFTFVDETDQQAVPDVTRIGPSQEKWGWIMFECGLENLTIKGGRQSGAVLYNSFGIMGKASDTERGGVLTSNNSSDSPTGSGYNTDVSDDNLPCDRTSPSSDLNGNSVSDEQDEGVESDDLKKDLPLMPPPPDSCSMKLTIKEIWFSFAAPTNVRSHTHAFSRQLNLLSTATPAVGAWLVPIDQLKSSLNKLETEGTLRICAVMGCIMTEALENKSVHFPLRSKYNRLTKVARFLQENPSCLLCNILHHYLHQANYSIIDDATMSDGLPALVTLKKGLVALARQWMKFIVVTPAFKGVSLHRPAQPLKPQIAMDHEHEDGLGLDNGGGLQSDTSADGAEFEFDAATVSEHTMLLEGTANRPPPGSSGPVTGAEIMRKLSKTHTHSDSALKIKGIHPYHSLSYTSGDTATDSPVHVGRAGMPVKDSPRKESLLSYLTGSFPSLHNLLEGTPQRSSAAVKSSSLTRTGNTVATDMLSEHPLLSEPSSVSFYNWMSNAVGNRGSVLQESPVTKSGHNSLPTGVAPNLPTIPSASDFNTVLSSDQNTLDGTHSQHSTSQDDVAGVEEANQGFPAVQLADAQVVFKPLLSHTGIQSQDTMPFCYRMYFGEHLSFSGTLDCLRADIVDSDTAKERKGKRARRQGHVNLPPLEFKPALMLGTFSISAVVMEKSVCTPQNSTSALSFHDLSKRYYNTFHCNFTISCQSISQHVDMALVRLIHQFSTMIDDIKATQTDIKLSRYTAGSASPTPTFKTRKHRDFRSSDFSRSSRGSLNGGNRVNNAKNKRTNNENNKKESRNKNSLGRSERRTSKVSRKGSKDVVDHMTIHMDDSDSITVSEQSEPSAECWQNMYKLLNFYSLISDPTGILEKSSETFGPAGVRSPTEPTCKVVFENEQDNSSLTKTQRKRSLVTSEPQHVTLIVFGIGMVNRTHLEADIGGLTMESELKRIHGSFTLKEKMKDVLHQKMTETCATAHIGGVNIVLLEGITPNIQLEDFPTSPTSTAKQEFLTVVKCSIAKSQALYSAQRGLKTNNAAVFKVGAISINIPQHPATLHSMMVRSSHQLSKQISDLIRQPSTAPQPVKEDIATPLPSEKTPTSVNQTPVETNEFPQLPEGLEKKPIVLKFSAMLDGIAIGAALLPSLKAEYKMGRMRSHGMTGAQTRFTFELPNHRLRFTSKVSATDMSTIPPSASLNLPPVTMSGKYIMEEHDSYSDQVWSIDELPSKQGYYLQGNYLRCVAEVGSFEHNLTTDLLNHLVFVQKVFMKEVNEVIQKVSGGEQPIPLWNEHDGTADGDKPKILLYSLNLQFKGIQVTATTPSMRAVRFETGLIELELSNRLQTKASPGSSSYLKLFGKCQVDLNLALGQIVKHQVYEEAGSDFHQVAYFKTRIGLRNALREEISGSSDREAVLITLNRPIVYAQPVAFDRAVLFWLNYKAAYDNWNEQRMALHKDIHMATKEVVDMLPGIQQTSAQAFGTLFLQLTVNDLGICLPITNTAQSNHTGDLDTGSALVLTIESTLITACSSESLVSKGHFKNFCIRFADGFETSWDDWKPEIHGDLVMNACVVPDGTYEVCSRTTGQAAAESSSAGTWTLNVLWKMCGIDVHMDPNIGKRLNALGNTLTTLTGEEDIDDIADLNSVNIADLSDEDEVDTMSPTIHTEATDYRRQAASASQPGELRGRKIMKRIVDIRELNEQAKVIDDLKKLGASEGTINQEIQRYQQLESVAVNDIRRDVRKKLRRSSMRAASLKDKWGLSYKPSYSRSKSISASGRPPLKRMERASSRVGETEELPEIRVDAASPGPRVTFNIQDTFPEETELDLLSVTIEGPSHYSSNSEGSCSVFSSPKTPGGFSPGIPFQTEEGRRDDSLSSTSEDSEKDEKDEDHERERFYIYRKPSHTSRKKATGFAAVHQLFTERWPTTPVNRSLSGTATERNIDFELDIRVEIDSGKCVLHPTTLLQEHDDISLRRSYDRSSRSLDQDSPSKKKKFQTNYASTTHLMTGKKVPSSLQTKPSDLETTVFYIPGVDVKLHYNSKTLKTESPNASRGSSLPRTLSKESKLYGMKDSATSPPSPPLPSTVQSKTNTLLPPQPPPIPAAKGKGSGGVKTAKLYAWVALQSLPEEMVISPCLLDFLEKALETIPITPVERNYTAVSSQDEDMGHFEIPDPMEESTTSLVSSSTSAYSSFPVDVVVYVRVQPSQIKFSCLPVSRVECMLKLPSLDLVFSSNRGELETLGTTYPAETLSPGGNATQSGTKTSASKTGIPGSSGLGSPLGRSRHSSSQSDLTSSSSSSSGLSFTACMSDFSLYVFHPYGAGKQKTAVSGLTPGSGGLGNVDEEPTSVTGRKDSLSINLEFVKVSLSRIRRSGGASFFESQSVSKSASKMDTTLINISAVCDIGSASFKYDMRRLSEILAFPRAWYRRSIARRLFLGDQTINLPTSGPGTPDSIEGVSQHLSPESSRKAYCKTWEQPSQSASFTHMPQSPNVFNEHMTNSTMSPGTVGQSLKSPASIRSRSVSDSSVPRRDSLSKTSTPFNKSNKAASQQGTPWETLVVFAINLKQLNVQMNMSNVMGNTTWTTSGLKSQGRLSVGSNRDREISMSVGLGRSQLDSKGGVVGGTIDVNALEMVAHISEHPNQQPSHKIQITMGSTEARVDYMGSSILMGIFSNADLKLQDEWKVNLYNTLDSSITDKSEIFVHGDLKWDIFQVMISRSTTPDLIKIGMKLQEFFTQQFDTSKRALSTWGPVPYLPPKTMTSNLEKSSQEQLLDAAHHRHWPGVLKVVSGCHISLFQIPLPEDGMQFGGSMSLHGNHMTLACFHGPNFRSKSWALFHLEEPNIAFWTEAQKIWEDGSSDHSTYIVQTLDFHLGHNTMVTKPCGALESPMATITKITRRRHENPPHGVASVKEWFNYVTATRNEELNLLRNVDANNTENSTTVKNSSLLSGFRGGSSYNHETETIFALPRMQLDFKSIHVQEPQEPSLQDASLKPKVECSVVTEFTDHICVTMDAELIMFLHDLVSAYLKEKEKAIFPPRILSTRPGQKSPIIIHDDNSSDKDREDSITYTTVDWRDFMCNTWHLEPTLRLISWTGRKIDPVGVDYILQKLGFHHARTTIPKWLQRGVMDPLDKVLSVLIKKLGTALQDEKEKKGKDKEEH</sequence>
<accession>Q2LD37</accession>
<accession>Q4W598</accession>
<accession>Q5CZA9</accession>
<accession>Q6ZS70</accession>
<accession>Q6ZV75</accession>
<accession>Q86XA5</accession>
<accession>Q8WVD8</accession>
<accession>Q9H742</accession>
<accession>Q9NT48</accession>
<accession>Q9NTC3</accession>
<accession>Q9NTI4</accession>
<accession>Q9P2H6</accession>
<accession>Q9UPP3</accession>
<evidence type="ECO:0000250" key="1">
    <source>
        <dbReference type="UniProtKB" id="A2AAE1"/>
    </source>
</evidence>
<evidence type="ECO:0000250" key="2">
    <source>
        <dbReference type="UniProtKB" id="Q12150"/>
    </source>
</evidence>
<evidence type="ECO:0000255" key="3"/>
<evidence type="ECO:0000256" key="4">
    <source>
        <dbReference type="SAM" id="MobiDB-lite"/>
    </source>
</evidence>
<evidence type="ECO:0000269" key="5">
    <source>
    </source>
</evidence>
<evidence type="ECO:0000269" key="6">
    <source>
    </source>
</evidence>
<evidence type="ECO:0000269" key="7">
    <source>
    </source>
</evidence>
<evidence type="ECO:0000269" key="8">
    <source>
    </source>
</evidence>
<evidence type="ECO:0000269" key="9">
    <source>
    </source>
</evidence>
<evidence type="ECO:0000269" key="10">
    <source>
    </source>
</evidence>
<evidence type="ECO:0000269" key="11">
    <source>
    </source>
</evidence>
<evidence type="ECO:0000303" key="12">
    <source>
    </source>
</evidence>
<evidence type="ECO:0000303" key="13">
    <source>
    </source>
</evidence>
<evidence type="ECO:0000303" key="14">
    <source>
    </source>
</evidence>
<evidence type="ECO:0000303" key="15">
    <source>
    </source>
</evidence>
<evidence type="ECO:0000303" key="16">
    <source>
    </source>
</evidence>
<evidence type="ECO:0000305" key="17"/>
<evidence type="ECO:0000305" key="18">
    <source>
    </source>
</evidence>
<evidence type="ECO:0000305" key="19">
    <source>
    </source>
</evidence>
<evidence type="ECO:0000312" key="20">
    <source>
        <dbReference type="HGNC" id="HGNC:26953"/>
    </source>
</evidence>
<evidence type="ECO:0007744" key="21">
    <source>
    </source>
</evidence>
<evidence type="ECO:0007744" key="22">
    <source>
    </source>
</evidence>
<evidence type="ECO:0007744" key="23">
    <source>
    </source>
</evidence>
<feature type="chain" id="PRO_0000317555" description="Bridge-like lipid transfer protein family member 1">
    <location>
        <begin position="1"/>
        <end position="5005"/>
    </location>
</feature>
<feature type="transmembrane region" description="Helical" evidence="3">
    <location>
        <begin position="26"/>
        <end position="46"/>
    </location>
</feature>
<feature type="region of interest" description="Disordered" evidence="4">
    <location>
        <begin position="691"/>
        <end position="721"/>
    </location>
</feature>
<feature type="region of interest" description="Disordered" evidence="4">
    <location>
        <begin position="1218"/>
        <end position="1257"/>
    </location>
</feature>
<feature type="region of interest" description="Disordered" evidence="4">
    <location>
        <begin position="1269"/>
        <end position="1310"/>
    </location>
</feature>
<feature type="region of interest" description="Disordered" evidence="4">
    <location>
        <begin position="1343"/>
        <end position="1376"/>
    </location>
</feature>
<feature type="region of interest" description="Disordered" evidence="4">
    <location>
        <begin position="1400"/>
        <end position="1427"/>
    </location>
</feature>
<feature type="region of interest" description="Disordered" evidence="4">
    <location>
        <begin position="1521"/>
        <end position="1548"/>
    </location>
</feature>
<feature type="region of interest" description="Disordered" evidence="4">
    <location>
        <begin position="1676"/>
        <end position="1704"/>
    </location>
</feature>
<feature type="region of interest" description="Disordered" evidence="4">
    <location>
        <begin position="1924"/>
        <end position="1991"/>
    </location>
</feature>
<feature type="region of interest" description="Disordered" evidence="4">
    <location>
        <begin position="2401"/>
        <end position="2420"/>
    </location>
</feature>
<feature type="region of interest" description="Disordered" evidence="4">
    <location>
        <begin position="2598"/>
        <end position="2677"/>
    </location>
</feature>
<feature type="region of interest" description="Disordered" evidence="4">
    <location>
        <begin position="2928"/>
        <end position="2967"/>
    </location>
</feature>
<feature type="region of interest" description="Disordered" evidence="4">
    <location>
        <begin position="3612"/>
        <end position="3661"/>
    </location>
</feature>
<feature type="region of interest" description="Disordered" evidence="4">
    <location>
        <begin position="3686"/>
        <end position="3744"/>
    </location>
</feature>
<feature type="region of interest" description="Disordered" evidence="4">
    <location>
        <begin position="3821"/>
        <end position="3843"/>
    </location>
</feature>
<feature type="region of interest" description="Disordered" evidence="4">
    <location>
        <begin position="3914"/>
        <end position="3954"/>
    </location>
</feature>
<feature type="region of interest" description="Disordered" evidence="4">
    <location>
        <begin position="4088"/>
        <end position="4146"/>
    </location>
</feature>
<feature type="region of interest" description="Disordered" evidence="4">
    <location>
        <begin position="4325"/>
        <end position="4394"/>
    </location>
</feature>
<feature type="compositionally biased region" description="Low complexity" evidence="4">
    <location>
        <begin position="700"/>
        <end position="711"/>
    </location>
</feature>
<feature type="compositionally biased region" description="Low complexity" evidence="4">
    <location>
        <begin position="1226"/>
        <end position="1240"/>
    </location>
</feature>
<feature type="compositionally biased region" description="Basic and acidic residues" evidence="4">
    <location>
        <begin position="1248"/>
        <end position="1257"/>
    </location>
</feature>
<feature type="compositionally biased region" description="Polar residues" evidence="4">
    <location>
        <begin position="1278"/>
        <end position="1303"/>
    </location>
</feature>
<feature type="compositionally biased region" description="Basic residues" evidence="4">
    <location>
        <begin position="1521"/>
        <end position="1530"/>
    </location>
</feature>
<feature type="compositionally biased region" description="Polar residues" evidence="4">
    <location>
        <begin position="1691"/>
        <end position="1704"/>
    </location>
</feature>
<feature type="compositionally biased region" description="Polar residues" evidence="4">
    <location>
        <begin position="1931"/>
        <end position="1948"/>
    </location>
</feature>
<feature type="compositionally biased region" description="Polar residues" evidence="4">
    <location>
        <begin position="1959"/>
        <end position="1971"/>
    </location>
</feature>
<feature type="compositionally biased region" description="Polar residues" evidence="4">
    <location>
        <begin position="2401"/>
        <end position="2418"/>
    </location>
</feature>
<feature type="compositionally biased region" description="Polar residues" evidence="4">
    <location>
        <begin position="2598"/>
        <end position="2608"/>
    </location>
</feature>
<feature type="compositionally biased region" description="Low complexity" evidence="4">
    <location>
        <begin position="2619"/>
        <end position="2638"/>
    </location>
</feature>
<feature type="compositionally biased region" description="Basic and acidic residues" evidence="4">
    <location>
        <begin position="2643"/>
        <end position="2665"/>
    </location>
</feature>
<feature type="compositionally biased region" description="Polar residues" evidence="4">
    <location>
        <begin position="2949"/>
        <end position="2964"/>
    </location>
</feature>
<feature type="compositionally biased region" description="Polar residues" evidence="4">
    <location>
        <begin position="3612"/>
        <end position="3622"/>
    </location>
</feature>
<feature type="compositionally biased region" description="Polar residues" evidence="4">
    <location>
        <begin position="3686"/>
        <end position="3700"/>
    </location>
</feature>
<feature type="compositionally biased region" description="Acidic residues" evidence="4">
    <location>
        <begin position="3727"/>
        <end position="3736"/>
    </location>
</feature>
<feature type="compositionally biased region" description="Basic and acidic residues" evidence="4">
    <location>
        <begin position="3821"/>
        <end position="3837"/>
    </location>
</feature>
<feature type="compositionally biased region" description="Polar residues" evidence="4">
    <location>
        <begin position="3931"/>
        <end position="3940"/>
    </location>
</feature>
<feature type="compositionally biased region" description="Polar residues" evidence="4">
    <location>
        <begin position="4098"/>
        <end position="4113"/>
    </location>
</feature>
<feature type="compositionally biased region" description="Low complexity" evidence="4">
    <location>
        <begin position="4122"/>
        <end position="4146"/>
    </location>
</feature>
<feature type="compositionally biased region" description="Polar residues" evidence="4">
    <location>
        <begin position="4325"/>
        <end position="4358"/>
    </location>
</feature>
<feature type="compositionally biased region" description="Low complexity" evidence="4">
    <location>
        <begin position="4359"/>
        <end position="4372"/>
    </location>
</feature>
<feature type="compositionally biased region" description="Polar residues" evidence="4">
    <location>
        <begin position="4381"/>
        <end position="4394"/>
    </location>
</feature>
<feature type="modified residue" description="Phosphoserine" evidence="21">
    <location>
        <position position="1301"/>
    </location>
</feature>
<feature type="modified residue" description="Phosphoserine" evidence="21">
    <location>
        <position position="1305"/>
    </location>
</feature>
<feature type="modified residue" description="Phosphoserine" evidence="22">
    <location>
        <position position="1323"/>
    </location>
</feature>
<feature type="modified residue" description="Phosphothreonine" evidence="22">
    <location>
        <position position="1325"/>
    </location>
</feature>
<feature type="modified residue" description="Phosphoserine" evidence="22">
    <location>
        <position position="1355"/>
    </location>
</feature>
<feature type="modified residue" description="Phosphoserine" evidence="23">
    <location>
        <position position="1406"/>
    </location>
</feature>
<feature type="modified residue" description="Phosphoserine" evidence="1">
    <location>
        <position position="1805"/>
    </location>
</feature>
<feature type="modified residue" description="Phosphoserine" evidence="1">
    <location>
        <position position="1808"/>
    </location>
</feature>
<feature type="modified residue" description="Phosphoserine" evidence="1">
    <location>
        <position position="2601"/>
    </location>
</feature>
<feature type="modified residue" description="Phosphoserine" evidence="22">
    <location>
        <position position="2603"/>
    </location>
</feature>
<feature type="modified residue" description="Phosphoserine" evidence="22">
    <location>
        <position position="2755"/>
    </location>
</feature>
<feature type="modified residue" description="Phosphoserine" evidence="22">
    <location>
        <position position="3562"/>
    </location>
</feature>
<feature type="modified residue" description="Phosphoserine" evidence="1">
    <location>
        <position position="3653"/>
    </location>
</feature>
<feature type="modified residue" description="Phosphoserine" evidence="22">
    <location>
        <position position="4124"/>
    </location>
</feature>
<feature type="splice variant" id="VSP_031023" description="In isoform 2 and isoform 4." evidence="13 14">
    <location>
        <position position="871"/>
    </location>
</feature>
<feature type="splice variant" id="VSP_031024" description="In isoform 5." evidence="12">
    <original>LACLLEWGQTFVFHVVCREYELERPKSVIICQHGIDRRFCESKLSCIPGPCPT</original>
    <variation>VWFSEYYLLTYFLFPFSTHLLKNNLYACLNVHCISTDGILMGVILAIQNFSYR</variation>
    <location>
        <begin position="932"/>
        <end position="984"/>
    </location>
</feature>
<feature type="splice variant" id="VSP_031025" description="In isoform 5." evidence="12">
    <location>
        <begin position="985"/>
        <end position="5005"/>
    </location>
</feature>
<feature type="splice variant" id="VSP_031026" description="In isoform 2." evidence="13 14">
    <original>TVVKCSIAKS</original>
    <variation>YVILFFFMAL</variation>
    <location>
        <begin position="2865"/>
        <end position="2874"/>
    </location>
</feature>
<feature type="splice variant" id="VSP_031027" description="In isoform 2." evidence="13 14">
    <location>
        <begin position="2875"/>
        <end position="5005"/>
    </location>
</feature>
<feature type="splice variant" id="VSP_031028" description="In isoform 6." evidence="14">
    <original>FPEETELDLLSVTIE</original>
    <variation>IAEIRRKKISFKVVF</variation>
    <location>
        <begin position="3666"/>
        <end position="3680"/>
    </location>
</feature>
<feature type="splice variant" id="VSP_031029" description="In isoform 6." evidence="14">
    <location>
        <begin position="3681"/>
        <end position="5005"/>
    </location>
</feature>
<feature type="splice variant" id="VSP_031030" description="In isoform 7." evidence="17">
    <original>AVCDIGS</original>
    <variation>GTQFYSF</variation>
    <location>
        <begin position="4245"/>
        <end position="4251"/>
    </location>
</feature>
<feature type="splice variant" id="VSP_031031" description="In isoform 7." evidence="17">
    <location>
        <begin position="4252"/>
        <end position="5005"/>
    </location>
</feature>
<feature type="sequence variant" id="VAR_083180" description="In ALKKUCS; uncertain significance; dbSNP:rs1553984252." evidence="9">
    <original>N</original>
    <variation>K</variation>
    <location>
        <position position="216"/>
    </location>
</feature>
<feature type="sequence variant" id="VAR_083181" description="In ALKKUCS; uncertain significance; dbSNP:rs1553984321." evidence="9">
    <original>D</original>
    <variation>G</variation>
    <location>
        <position position="228"/>
    </location>
</feature>
<feature type="sequence variant" id="VAR_080684" description="In ALKKUCS." evidence="6 7">
    <location>
        <begin position="519"/>
        <end position="5005"/>
    </location>
</feature>
<feature type="sequence variant" id="VAR_083182" description="In ALKKUCS." evidence="8">
    <location>
        <begin position="825"/>
        <end position="872"/>
    </location>
</feature>
<feature type="sequence variant" id="VAR_080685" description="In ALKKUCS; uncertain significance; dbSNP:rs1051597475." evidence="7">
    <original>R</original>
    <variation>C</variation>
    <location>
        <position position="968"/>
    </location>
</feature>
<feature type="sequence variant" id="VAR_038547" description="In dbSNP:rs6848868.">
    <original>I</original>
    <variation>T</variation>
    <location>
        <position position="978"/>
    </location>
</feature>
<feature type="sequence variant" id="VAR_080686" description="In ALKKUCS; uncertain significance; dbSNP:rs770791100." evidence="7">
    <original>Y</original>
    <variation>C</variation>
    <location>
        <position position="1329"/>
    </location>
</feature>
<feature type="sequence variant" id="VAR_080687" description="In ALKKUCS; uncertain significance; dbSNP:rs368227278." evidence="7">
    <original>M</original>
    <variation>I</variation>
    <location>
        <position position="1573"/>
    </location>
</feature>
<feature type="sequence variant" id="VAR_080688" description="In ALKKUCS; uncertain significance; dbSNP:rs1554025656." evidence="7">
    <original>V</original>
    <variation>M</variation>
    <location>
        <position position="1867"/>
    </location>
</feature>
<feature type="sequence variant" id="VAR_061241" description="In dbSNP:rs56363411.">
    <original>D</original>
    <variation>E</variation>
    <location>
        <position position="1951"/>
    </location>
</feature>
<feature type="sequence variant" id="VAR_080689" description="In ALKKUCS; uncertain significance; dbSNP:rs1263871665." evidence="7">
    <original>R</original>
    <variation>Q</variation>
    <location>
        <position position="1958"/>
    </location>
</feature>
<feature type="sequence variant" id="VAR_061242" description="In dbSNP:rs45608936.">
    <original>S</original>
    <variation>R</variation>
    <location>
        <position position="2521"/>
    </location>
</feature>
<feature type="sequence variant" id="VAR_080690" description="In ALKKUCS; uncertain significance." evidence="7">
    <original>P</original>
    <variation>H</variation>
    <location>
        <position position="3050"/>
    </location>
</feature>
<feature type="sequence variant" id="VAR_080691" description="In ALKKUCS; uncertain significance; dbSNP:rs1554059454." evidence="7">
    <original>G</original>
    <variation>R</variation>
    <location>
        <position position="3385"/>
    </location>
</feature>
<feature type="sequence variant" id="VAR_080692" description="In ALKKUCS." evidence="7">
    <location>
        <begin position="4023"/>
        <end position="5005"/>
    </location>
</feature>
<feature type="sequence variant" id="VAR_038548" description="In dbSNP:rs2306369.">
    <original>T</original>
    <variation>A</variation>
    <location>
        <position position="4352"/>
    </location>
</feature>
<feature type="sequence variant" id="VAR_083183" description="In ALKKUCS." evidence="9">
    <location>
        <begin position="4375"/>
        <end position="5005"/>
    </location>
</feature>
<feature type="sequence variant" id="VAR_038549" description="In dbSNP:rs10017270.">
    <original>T</original>
    <variation>A</variation>
    <location>
        <position position="4786"/>
    </location>
</feature>
<feature type="sequence conflict" description="In Ref. 1; ABC59821." evidence="17" ref="1">
    <original>N</original>
    <variation>G</variation>
    <location>
        <position position="26"/>
    </location>
</feature>
<feature type="sequence conflict" description="In Ref. 1; ABC59821." evidence="17" ref="1">
    <original>E</original>
    <variation>G</variation>
    <location>
        <position position="155"/>
    </location>
</feature>
<feature type="sequence conflict" description="In Ref. 1; ABC59821." evidence="17" ref="1">
    <original>M</original>
    <variation>T</variation>
    <location>
        <position position="247"/>
    </location>
</feature>
<feature type="sequence conflict" description="In Ref. 1; ABC59821." evidence="17" ref="1">
    <original>G</original>
    <variation>S</variation>
    <location>
        <position position="336"/>
    </location>
</feature>
<feature type="sequence conflict" description="In Ref. 1; ABC59821." evidence="17" ref="1">
    <original>D</original>
    <variation>G</variation>
    <location>
        <position position="571"/>
    </location>
</feature>
<feature type="sequence conflict" description="In Ref. 3; BAC85988." evidence="17" ref="3">
    <original>L</original>
    <variation>P</variation>
    <location>
        <position position="857"/>
    </location>
</feature>
<feature type="sequence conflict" description="In Ref. 5; CAI56756." evidence="17" ref="5">
    <original>T</original>
    <variation>A</variation>
    <location>
        <position position="2456"/>
    </location>
</feature>
<name>BLTP1_HUMAN</name>